<proteinExistence type="evidence at protein level"/>
<name>VIGLN_RAT</name>
<dbReference type="EMBL" id="U90725">
    <property type="protein sequence ID" value="AAD09246.1"/>
    <property type="molecule type" value="mRNA"/>
</dbReference>
<dbReference type="SMR" id="Q9Z1A6"/>
<dbReference type="FunCoup" id="Q9Z1A6">
    <property type="interactions" value="2537"/>
</dbReference>
<dbReference type="IntAct" id="Q9Z1A6">
    <property type="interactions" value="1"/>
</dbReference>
<dbReference type="STRING" id="10116.ENSRNOP00000074707"/>
<dbReference type="iPTMnet" id="Q9Z1A6"/>
<dbReference type="PhosphoSitePlus" id="Q9Z1A6"/>
<dbReference type="jPOST" id="Q9Z1A6"/>
<dbReference type="PaxDb" id="10116-ENSRNOP00000048476"/>
<dbReference type="UCSC" id="RGD:620962">
    <property type="organism name" value="rat"/>
</dbReference>
<dbReference type="AGR" id="RGD:620962"/>
<dbReference type="RGD" id="620962">
    <property type="gene designation" value="Hdlbp"/>
</dbReference>
<dbReference type="eggNOG" id="KOG2208">
    <property type="taxonomic scope" value="Eukaryota"/>
</dbReference>
<dbReference type="InParanoid" id="Q9Z1A6"/>
<dbReference type="PhylomeDB" id="Q9Z1A6"/>
<dbReference type="Reactome" id="R-RNO-8964011">
    <property type="pathway name" value="HDL clearance"/>
</dbReference>
<dbReference type="PRO" id="PR:Q9Z1A6"/>
<dbReference type="Proteomes" id="UP000002494">
    <property type="component" value="Unplaced"/>
</dbReference>
<dbReference type="GO" id="GO:0005737">
    <property type="term" value="C:cytoplasm"/>
    <property type="evidence" value="ECO:0007669"/>
    <property type="project" value="UniProtKB-SubCell"/>
</dbReference>
<dbReference type="GO" id="GO:0034364">
    <property type="term" value="C:high-density lipoprotein particle"/>
    <property type="evidence" value="ECO:0007669"/>
    <property type="project" value="UniProtKB-KW"/>
</dbReference>
<dbReference type="GO" id="GO:0005634">
    <property type="term" value="C:nucleus"/>
    <property type="evidence" value="ECO:0007669"/>
    <property type="project" value="UniProtKB-SubCell"/>
</dbReference>
<dbReference type="GO" id="GO:0003729">
    <property type="term" value="F:mRNA binding"/>
    <property type="evidence" value="ECO:0000318"/>
    <property type="project" value="GO_Central"/>
</dbReference>
<dbReference type="GO" id="GO:0008203">
    <property type="term" value="P:cholesterol metabolic process"/>
    <property type="evidence" value="ECO:0007669"/>
    <property type="project" value="UniProtKB-KW"/>
</dbReference>
<dbReference type="GO" id="GO:0006869">
    <property type="term" value="P:lipid transport"/>
    <property type="evidence" value="ECO:0007669"/>
    <property type="project" value="UniProtKB-KW"/>
</dbReference>
<dbReference type="CDD" id="cd22405">
    <property type="entry name" value="KH-I_Vigilin_rpt1"/>
    <property type="match status" value="1"/>
</dbReference>
<dbReference type="CDD" id="cd22413">
    <property type="entry name" value="KH-I_Vigilin_rpt10"/>
    <property type="match status" value="1"/>
</dbReference>
<dbReference type="CDD" id="cd22414">
    <property type="entry name" value="KH-I_Vigilin_rpt11"/>
    <property type="match status" value="1"/>
</dbReference>
<dbReference type="CDD" id="cd22415">
    <property type="entry name" value="KH-I_Vigilin_rpt12"/>
    <property type="match status" value="1"/>
</dbReference>
<dbReference type="CDD" id="cd22416">
    <property type="entry name" value="KH-I_Vigilin_rpt13"/>
    <property type="match status" value="1"/>
</dbReference>
<dbReference type="CDD" id="cd22417">
    <property type="entry name" value="KH-I_Vigilin_rpt14"/>
    <property type="match status" value="1"/>
</dbReference>
<dbReference type="CDD" id="cd22418">
    <property type="entry name" value="KH-I_Vigilin_rpt15"/>
    <property type="match status" value="1"/>
</dbReference>
<dbReference type="CDD" id="cd22406">
    <property type="entry name" value="KH-I_Vigilin_rpt2"/>
    <property type="match status" value="1"/>
</dbReference>
<dbReference type="CDD" id="cd22407">
    <property type="entry name" value="KH-I_Vigilin_rpt3"/>
    <property type="match status" value="1"/>
</dbReference>
<dbReference type="CDD" id="cd22408">
    <property type="entry name" value="KH-I_Vigilin_rpt4"/>
    <property type="match status" value="1"/>
</dbReference>
<dbReference type="CDD" id="cd22409">
    <property type="entry name" value="KH-I_Vigilin_rpt5"/>
    <property type="match status" value="1"/>
</dbReference>
<dbReference type="CDD" id="cd02394">
    <property type="entry name" value="KH-I_Vigilin_rpt6"/>
    <property type="match status" value="1"/>
</dbReference>
<dbReference type="CDD" id="cd22410">
    <property type="entry name" value="KH-I_Vigilin_rpt7"/>
    <property type="match status" value="1"/>
</dbReference>
<dbReference type="CDD" id="cd22411">
    <property type="entry name" value="KH-I_Vigilin_rpt8"/>
    <property type="match status" value="1"/>
</dbReference>
<dbReference type="CDD" id="cd22412">
    <property type="entry name" value="KH-I_Vigilin_rpt9"/>
    <property type="match status" value="1"/>
</dbReference>
<dbReference type="FunFam" id="3.30.1370.10:FF:000046">
    <property type="entry name" value="High density lipoprotein binding protein"/>
    <property type="match status" value="1"/>
</dbReference>
<dbReference type="FunFam" id="3.30.1370.10:FF:000057">
    <property type="entry name" value="High density lipoprotein binding protein"/>
    <property type="match status" value="1"/>
</dbReference>
<dbReference type="FunFam" id="3.30.1370.10:FF:000061">
    <property type="entry name" value="High density lipoprotein binding protein"/>
    <property type="match status" value="1"/>
</dbReference>
<dbReference type="FunFam" id="3.30.1370.10:FF:000067">
    <property type="entry name" value="High density lipoprotein binding protein"/>
    <property type="match status" value="1"/>
</dbReference>
<dbReference type="FunFam" id="3.30.1370.10:FF:000042">
    <property type="entry name" value="Vigilin isoform X1"/>
    <property type="match status" value="1"/>
</dbReference>
<dbReference type="FunFam" id="3.30.1370.10:FF:000018">
    <property type="entry name" value="vigilin isoform X1"/>
    <property type="match status" value="3"/>
</dbReference>
<dbReference type="FunFam" id="3.30.1370.10:FF:000033">
    <property type="entry name" value="vigilin isoform X1"/>
    <property type="match status" value="1"/>
</dbReference>
<dbReference type="FunFam" id="3.30.1370.10:FF:000039">
    <property type="entry name" value="vigilin isoform X1"/>
    <property type="match status" value="1"/>
</dbReference>
<dbReference type="FunFam" id="3.30.1370.10:FF:000041">
    <property type="entry name" value="vigilin isoform X1"/>
    <property type="match status" value="1"/>
</dbReference>
<dbReference type="FunFam" id="3.30.1370.10:FF:000050">
    <property type="entry name" value="vigilin isoform X1"/>
    <property type="match status" value="1"/>
</dbReference>
<dbReference type="FunFam" id="3.30.1370.10:FF:000062">
    <property type="entry name" value="vigilin isoform X1"/>
    <property type="match status" value="1"/>
</dbReference>
<dbReference type="Gene3D" id="3.30.1370.10">
    <property type="entry name" value="K Homology domain, type 1"/>
    <property type="match status" value="14"/>
</dbReference>
<dbReference type="InterPro" id="IPR004087">
    <property type="entry name" value="KH_dom"/>
</dbReference>
<dbReference type="InterPro" id="IPR004088">
    <property type="entry name" value="KH_dom_type_1"/>
</dbReference>
<dbReference type="InterPro" id="IPR036612">
    <property type="entry name" value="KH_dom_type_1_sf"/>
</dbReference>
<dbReference type="PANTHER" id="PTHR10627">
    <property type="entry name" value="SCP160"/>
    <property type="match status" value="1"/>
</dbReference>
<dbReference type="PANTHER" id="PTHR10627:SF34">
    <property type="entry name" value="VIGILIN"/>
    <property type="match status" value="1"/>
</dbReference>
<dbReference type="Pfam" id="PF00013">
    <property type="entry name" value="KH_1"/>
    <property type="match status" value="14"/>
</dbReference>
<dbReference type="Pfam" id="PF24668">
    <property type="entry name" value="KH_Vigilin"/>
    <property type="match status" value="1"/>
</dbReference>
<dbReference type="SMART" id="SM00322">
    <property type="entry name" value="KH"/>
    <property type="match status" value="14"/>
</dbReference>
<dbReference type="SUPFAM" id="SSF54791">
    <property type="entry name" value="Eukaryotic type KH-domain (KH-domain type I)"/>
    <property type="match status" value="12"/>
</dbReference>
<dbReference type="PROSITE" id="PS50084">
    <property type="entry name" value="KH_TYPE_1"/>
    <property type="match status" value="14"/>
</dbReference>
<sequence>MSSVAVLTQESFAEHRSGLVPQQIIVATLNSEEESDPPTYKDAFPPLPEKAACLESAQEPAGAWSNKIRPIKASVITQVFHVPLEERKYKDMNQFGEGEQAKICLEIMQRTGAHLELSLAKDQGLSIMVSGKLDAVMKARKDIVARLQTQASATVPIPKEHHRFVIGKNGEKLQDLELKTATKIQIPRPDDPSNQIKITGTKEGIEKARHEVLLISAEQDKRAVKRLEVEKAFHPFIAGPYNRLVGEIMQETGTRINIPPPSVNRTEIVFTGEKEQLAQAVARIKKIYEEKKKKTTTIAVEVKKSQHKYVIGPKGNSLQEILERTGVSVEIPPSDSISETVILRGEPEKLGQALTEVYAKANSFTVSSVSAPSWLHRFIIGKKGQNLAKITHQMPKVHIEFTEGEDKITLEGPTEDVNVAQEQIEGMVKDLINRMDYVEINIDHKFHRHLIGKSGANINRIKDQYKVSVRIPPDSEKSNLIRIEGDPQGVQQAKRELLELASRMENERTKDLIIEQRFHRTIIGQKGERIREIRDKFPEVIINFPDPAQKSEIVQLRGPKNEVEKCTKYMQKMVADLVENSYSISVPIFKQFHKNIIGKGGANIKKIREESNTKIDLPAENSNSETIVITGKRANCEAARSRILSIQKDLANIAEVEVSIPAKLHNSLIGTKGRLIRSIMEECGGVHIHFPVEGSGSDTVVIRGPSSDVEKAKKQLLHLAEEKQTKSFTVDIRAKPEYHKFLIGKGGGKIRKVRDSTGARIIFPAAEDKDQDLITIIGKEDAVREAQKELEALIQNLDNVVEDYMLVDPRHHRHFVIRRGQVLREIAEEYGGVMVSFPRSGTQSDKVTLKGAKDCVEAAKKRIQEIIEDLEAQVTLECAIPQKFHRSVMGPKGSRIQQITRDYNVQIKFPDREENPVHSVEPSIQENGDEAGEGREAKETDPGSPRRCDIIVISGRKEKCEAAKEALEALVPVTIEVEVPFDLHRYIIGQKGSGIRKMMDEFEVNIHVPAPELQSHTIAITGLAANLDRAKAGLLDRVKELQAEQEDRALRSFKLSVTVDPKYHPKIIGGKGAVITQIRLEHDVNIQFPDKDDGNQPQDQITITGYEKNTEAARDAILKIVGELEQMVSEDVPLDHRVHARIIGARGKAIRKIMDEFKVDIRFPQSGAPDPNCVTVTGLPENVEEAIDHILNLEEEYLADVVDSEALQVYMKPPAHEESKAPSKGFVVRDAPWTSNSSEKAPDMSSSEEIPTFGAQVAPKTLPWGPKR</sequence>
<reference key="1">
    <citation type="submission" date="1997-02" db="EMBL/GenBank/DDBJ databases">
        <title>Rat homologue of HBP.</title>
        <authorList>
            <person name="Vinten J."/>
            <person name="Tranum-Jensen J."/>
            <person name="Voldstedlund M."/>
            <person name="Christiansen K."/>
            <person name="Carlsen J."/>
            <person name="Clausen H."/>
        </authorList>
    </citation>
    <scope>NUCLEOTIDE SEQUENCE [MRNA]</scope>
</reference>
<reference key="2">
    <citation type="journal article" date="2012" name="Nat. Commun.">
        <title>Quantitative maps of protein phosphorylation sites across 14 different rat organs and tissues.</title>
        <authorList>
            <person name="Lundby A."/>
            <person name="Secher A."/>
            <person name="Lage K."/>
            <person name="Nordsborg N.B."/>
            <person name="Dmytriyev A."/>
            <person name="Lundby C."/>
            <person name="Olsen J.V."/>
        </authorList>
    </citation>
    <scope>PHOSPHORYLATION [LARGE SCALE ANALYSIS] AT SER-31; SER-35 AND SER-645</scope>
    <scope>IDENTIFICATION BY MASS SPECTROMETRY [LARGE SCALE ANALYSIS]</scope>
</reference>
<organism>
    <name type="scientific">Rattus norvegicus</name>
    <name type="common">Rat</name>
    <dbReference type="NCBI Taxonomy" id="10116"/>
    <lineage>
        <taxon>Eukaryota</taxon>
        <taxon>Metazoa</taxon>
        <taxon>Chordata</taxon>
        <taxon>Craniata</taxon>
        <taxon>Vertebrata</taxon>
        <taxon>Euteleostomi</taxon>
        <taxon>Mammalia</taxon>
        <taxon>Eutheria</taxon>
        <taxon>Euarchontoglires</taxon>
        <taxon>Glires</taxon>
        <taxon>Rodentia</taxon>
        <taxon>Myomorpha</taxon>
        <taxon>Muroidea</taxon>
        <taxon>Muridae</taxon>
        <taxon>Murinae</taxon>
        <taxon>Rattus</taxon>
    </lineage>
</organism>
<protein>
    <recommendedName>
        <fullName>Vigilin</fullName>
    </recommendedName>
    <alternativeName>
        <fullName>High density lipoprotein-binding protein</fullName>
        <shortName>HDL-binding protein</shortName>
    </alternativeName>
</protein>
<comment type="function">
    <text evidence="1">Appears to play a role in cell sterol metabolism. It may function to protect cells from over-accumulation of cholesterol (By similarity).</text>
</comment>
<comment type="subcellular location">
    <subcellularLocation>
        <location evidence="1">Cytoplasm</location>
    </subcellularLocation>
    <subcellularLocation>
        <location evidence="1">Nucleus</location>
    </subcellularLocation>
</comment>
<keyword id="KW-0007">Acetylation</keyword>
<keyword id="KW-0153">Cholesterol metabolism</keyword>
<keyword id="KW-0963">Cytoplasm</keyword>
<keyword id="KW-0345">HDL</keyword>
<keyword id="KW-0443">Lipid metabolism</keyword>
<keyword id="KW-0445">Lipid transport</keyword>
<keyword id="KW-0539">Nucleus</keyword>
<keyword id="KW-0597">Phosphoprotein</keyword>
<keyword id="KW-1185">Reference proteome</keyword>
<keyword id="KW-0677">Repeat</keyword>
<keyword id="KW-0694">RNA-binding</keyword>
<keyword id="KW-0753">Steroid metabolism</keyword>
<keyword id="KW-1207">Sterol metabolism</keyword>
<keyword id="KW-0813">Transport</keyword>
<gene>
    <name type="primary">Hdlbp</name>
    <name type="synonym">Hbp</name>
</gene>
<evidence type="ECO:0000250" key="1"/>
<evidence type="ECO:0000250" key="2">
    <source>
        <dbReference type="UniProtKB" id="Q00341"/>
    </source>
</evidence>
<evidence type="ECO:0000250" key="3">
    <source>
        <dbReference type="UniProtKB" id="Q8VDJ3"/>
    </source>
</evidence>
<evidence type="ECO:0000255" key="4"/>
<evidence type="ECO:0000255" key="5">
    <source>
        <dbReference type="PROSITE-ProRule" id="PRU00117"/>
    </source>
</evidence>
<evidence type="ECO:0000256" key="6">
    <source>
        <dbReference type="SAM" id="MobiDB-lite"/>
    </source>
</evidence>
<evidence type="ECO:0007744" key="7">
    <source>
    </source>
</evidence>
<feature type="initiator methionine" description="Removed" evidence="2">
    <location>
        <position position="1"/>
    </location>
</feature>
<feature type="chain" id="PRO_0000050133" description="Vigilin">
    <location>
        <begin position="2"/>
        <end position="1268"/>
    </location>
</feature>
<feature type="domain" description="KH 1" evidence="5">
    <location>
        <begin position="150"/>
        <end position="212"/>
    </location>
</feature>
<feature type="domain" description="KH 2" evidence="5">
    <location>
        <begin position="222"/>
        <end position="284"/>
    </location>
</feature>
<feature type="domain" description="KH 3" evidence="5">
    <location>
        <begin position="295"/>
        <end position="357"/>
    </location>
</feature>
<feature type="domain" description="KH 4" evidence="5">
    <location>
        <begin position="364"/>
        <end position="424"/>
    </location>
</feature>
<feature type="domain" description="KH 5" evidence="5">
    <location>
        <begin position="435"/>
        <end position="497"/>
    </location>
</feature>
<feature type="domain" description="KH 6" evidence="5">
    <location>
        <begin position="507"/>
        <end position="570"/>
    </location>
</feature>
<feature type="domain" description="KH 7" evidence="5">
    <location>
        <begin position="581"/>
        <end position="643"/>
    </location>
</feature>
<feature type="domain" description="KH 8" evidence="5">
    <location>
        <begin position="653"/>
        <end position="716"/>
    </location>
</feature>
<feature type="domain" description="KH 9" evidence="5">
    <location>
        <begin position="727"/>
        <end position="790"/>
    </location>
</feature>
<feature type="domain" description="KH 10" evidence="5">
    <location>
        <begin position="800"/>
        <end position="863"/>
    </location>
</feature>
<feature type="domain" description="KH 11" evidence="5">
    <location>
        <begin position="873"/>
        <end position="967"/>
    </location>
</feature>
<feature type="domain" description="KH 12" evidence="5">
    <location>
        <begin position="972"/>
        <end position="1034"/>
    </location>
</feature>
<feature type="domain" description="KH 13" evidence="5">
    <location>
        <begin position="1052"/>
        <end position="1117"/>
    </location>
</feature>
<feature type="domain" description="KH 14" evidence="5">
    <location>
        <begin position="1127"/>
        <end position="1190"/>
    </location>
</feature>
<feature type="region of interest" description="Disordered" evidence="6">
    <location>
        <begin position="910"/>
        <end position="946"/>
    </location>
</feature>
<feature type="region of interest" description="Disordered" evidence="6">
    <location>
        <begin position="1214"/>
        <end position="1268"/>
    </location>
</feature>
<feature type="compositionally biased region" description="Basic and acidic residues" evidence="6">
    <location>
        <begin position="932"/>
        <end position="946"/>
    </location>
</feature>
<feature type="compositionally biased region" description="Polar residues" evidence="6">
    <location>
        <begin position="1233"/>
        <end position="1249"/>
    </location>
</feature>
<feature type="modified residue" description="N-acetylserine" evidence="2">
    <location>
        <position position="2"/>
    </location>
</feature>
<feature type="modified residue" description="Phosphothreonine" evidence="2">
    <location>
        <position position="8"/>
    </location>
</feature>
<feature type="modified residue" description="Phosphoserine" evidence="2">
    <location>
        <position position="11"/>
    </location>
</feature>
<feature type="modified residue" description="Phosphoserine" evidence="7">
    <location>
        <position position="31"/>
    </location>
</feature>
<feature type="modified residue" description="Phosphoserine" evidence="7">
    <location>
        <position position="35"/>
    </location>
</feature>
<feature type="modified residue" description="Phosphothreonine" evidence="4">
    <location>
        <position position="295"/>
    </location>
</feature>
<feature type="modified residue" description="Phosphothreonine" evidence="4">
    <location>
        <position position="296"/>
    </location>
</feature>
<feature type="modified residue" description="Phosphoserine" evidence="2">
    <location>
        <position position="317"/>
    </location>
</feature>
<feature type="modified residue" description="Phosphotyrosine" evidence="2">
    <location>
        <position position="437"/>
    </location>
</feature>
<feature type="modified residue" description="Phosphoserine" evidence="7">
    <location>
        <position position="645"/>
    </location>
</feature>
<feature type="modified residue" description="N6-acetyllysine" evidence="3">
    <location>
        <position position="991"/>
    </location>
</feature>
<feature type="modified residue" description="Phosphoserine" evidence="2">
    <location>
        <position position="1247"/>
    </location>
</feature>
<accession>Q9Z1A6</accession>